<gene>
    <name evidence="16" type="primary">IRAK3</name>
</gene>
<protein>
    <recommendedName>
        <fullName>Interleukin-1 receptor-associated kinase 3</fullName>
        <shortName>IRAK-3</shortName>
    </recommendedName>
    <alternativeName>
        <fullName>IL-1 receptor-associated kinase M</fullName>
        <shortName>IRAK-M</shortName>
    </alternativeName>
    <alternativeName>
        <fullName evidence="14">Inactive IL-1 receptor-associated kinase 3</fullName>
    </alternativeName>
</protein>
<evidence type="ECO:0000250" key="1">
    <source>
        <dbReference type="UniProtKB" id="Q8K4B2"/>
    </source>
</evidence>
<evidence type="ECO:0000255" key="2">
    <source>
        <dbReference type="PROSITE-ProRule" id="PRU00064"/>
    </source>
</evidence>
<evidence type="ECO:0000255" key="3">
    <source>
        <dbReference type="PROSITE-ProRule" id="PRU00159"/>
    </source>
</evidence>
<evidence type="ECO:0000256" key="4">
    <source>
        <dbReference type="SAM" id="MobiDB-lite"/>
    </source>
</evidence>
<evidence type="ECO:0000269" key="5">
    <source>
    </source>
</evidence>
<evidence type="ECO:0000269" key="6">
    <source>
    </source>
</evidence>
<evidence type="ECO:0000269" key="7">
    <source>
    </source>
</evidence>
<evidence type="ECO:0000269" key="8">
    <source>
    </source>
</evidence>
<evidence type="ECO:0000269" key="9">
    <source>
    </source>
</evidence>
<evidence type="ECO:0000269" key="10">
    <source>
    </source>
</evidence>
<evidence type="ECO:0000269" key="11">
    <source>
    </source>
</evidence>
<evidence type="ECO:0000269" key="12">
    <source ref="8"/>
</evidence>
<evidence type="ECO:0000303" key="13">
    <source>
    </source>
</evidence>
<evidence type="ECO:0000305" key="14"/>
<evidence type="ECO:0000312" key="15">
    <source>
        <dbReference type="EMBL" id="AAD40879.1"/>
    </source>
</evidence>
<evidence type="ECO:0000312" key="16">
    <source>
        <dbReference type="EMBL" id="AAH57800.1"/>
    </source>
</evidence>
<evidence type="ECO:0007744" key="17">
    <source>
        <dbReference type="PDB" id="5UKE"/>
    </source>
</evidence>
<evidence type="ECO:0007744" key="18">
    <source>
        <dbReference type="PDB" id="6RUU"/>
    </source>
</evidence>
<evidence type="ECO:0007744" key="19">
    <source>
        <dbReference type="PDB" id="6ZIW"/>
    </source>
</evidence>
<evidence type="ECO:0007744" key="20">
    <source>
    </source>
</evidence>
<evidence type="ECO:0007829" key="21">
    <source>
        <dbReference type="PDB" id="5UKE"/>
    </source>
</evidence>
<evidence type="ECO:0007829" key="22">
    <source>
        <dbReference type="PDB" id="6RUU"/>
    </source>
</evidence>
<evidence type="ECO:0007829" key="23">
    <source>
        <dbReference type="PDB" id="6ZIW"/>
    </source>
</evidence>
<reference evidence="14 15" key="1">
    <citation type="journal article" date="1999" name="J. Biol. Chem.">
        <title>IRAK-M is a novel member of the Pelle/interleukin-1 receptor-associated kinase (IRAK) family.</title>
        <authorList>
            <person name="Wesche H."/>
            <person name="Gao X."/>
            <person name="Li X."/>
            <person name="Kirschning C.J."/>
            <person name="Stark G.R."/>
            <person name="Cao Z."/>
        </authorList>
    </citation>
    <scope>NUCLEOTIDE SEQUENCE [MRNA] (ISOFORM 1)</scope>
    <scope>FUNCTION</scope>
    <scope>TISSUE SPECIFICITY</scope>
    <scope>VARIANT VAL-147</scope>
    <source>
        <tissue>Peripheral blood lymphocyte</tissue>
    </source>
</reference>
<reference key="2">
    <citation type="journal article" date="2004" name="Nat. Genet.">
        <title>Complete sequencing and characterization of 21,243 full-length human cDNAs.</title>
        <authorList>
            <person name="Ota T."/>
            <person name="Suzuki Y."/>
            <person name="Nishikawa T."/>
            <person name="Otsuki T."/>
            <person name="Sugiyama T."/>
            <person name="Irie R."/>
            <person name="Wakamatsu A."/>
            <person name="Hayashi K."/>
            <person name="Sato H."/>
            <person name="Nagai K."/>
            <person name="Kimura K."/>
            <person name="Makita H."/>
            <person name="Sekine M."/>
            <person name="Obayashi M."/>
            <person name="Nishi T."/>
            <person name="Shibahara T."/>
            <person name="Tanaka T."/>
            <person name="Ishii S."/>
            <person name="Yamamoto J."/>
            <person name="Saito K."/>
            <person name="Kawai Y."/>
            <person name="Isono Y."/>
            <person name="Nakamura Y."/>
            <person name="Nagahari K."/>
            <person name="Murakami K."/>
            <person name="Yasuda T."/>
            <person name="Iwayanagi T."/>
            <person name="Wagatsuma M."/>
            <person name="Shiratori A."/>
            <person name="Sudo H."/>
            <person name="Hosoiri T."/>
            <person name="Kaku Y."/>
            <person name="Kodaira H."/>
            <person name="Kondo H."/>
            <person name="Sugawara M."/>
            <person name="Takahashi M."/>
            <person name="Kanda K."/>
            <person name="Yokoi T."/>
            <person name="Furuya T."/>
            <person name="Kikkawa E."/>
            <person name="Omura Y."/>
            <person name="Abe K."/>
            <person name="Kamihara K."/>
            <person name="Katsuta N."/>
            <person name="Sato K."/>
            <person name="Tanikawa M."/>
            <person name="Yamazaki M."/>
            <person name="Ninomiya K."/>
            <person name="Ishibashi T."/>
            <person name="Yamashita H."/>
            <person name="Murakawa K."/>
            <person name="Fujimori K."/>
            <person name="Tanai H."/>
            <person name="Kimata M."/>
            <person name="Watanabe M."/>
            <person name="Hiraoka S."/>
            <person name="Chiba Y."/>
            <person name="Ishida S."/>
            <person name="Ono Y."/>
            <person name="Takiguchi S."/>
            <person name="Watanabe S."/>
            <person name="Yosida M."/>
            <person name="Hotuta T."/>
            <person name="Kusano J."/>
            <person name="Kanehori K."/>
            <person name="Takahashi-Fujii A."/>
            <person name="Hara H."/>
            <person name="Tanase T.-O."/>
            <person name="Nomura Y."/>
            <person name="Togiya S."/>
            <person name="Komai F."/>
            <person name="Hara R."/>
            <person name="Takeuchi K."/>
            <person name="Arita M."/>
            <person name="Imose N."/>
            <person name="Musashino K."/>
            <person name="Yuuki H."/>
            <person name="Oshima A."/>
            <person name="Sasaki N."/>
            <person name="Aotsuka S."/>
            <person name="Yoshikawa Y."/>
            <person name="Matsunawa H."/>
            <person name="Ichihara T."/>
            <person name="Shiohata N."/>
            <person name="Sano S."/>
            <person name="Moriya S."/>
            <person name="Momiyama H."/>
            <person name="Satoh N."/>
            <person name="Takami S."/>
            <person name="Terashima Y."/>
            <person name="Suzuki O."/>
            <person name="Nakagawa S."/>
            <person name="Senoh A."/>
            <person name="Mizoguchi H."/>
            <person name="Goto Y."/>
            <person name="Shimizu F."/>
            <person name="Wakebe H."/>
            <person name="Hishigaki H."/>
            <person name="Watanabe T."/>
            <person name="Sugiyama A."/>
            <person name="Takemoto M."/>
            <person name="Kawakami B."/>
            <person name="Yamazaki M."/>
            <person name="Watanabe K."/>
            <person name="Kumagai A."/>
            <person name="Itakura S."/>
            <person name="Fukuzumi Y."/>
            <person name="Fujimori Y."/>
            <person name="Komiyama M."/>
            <person name="Tashiro H."/>
            <person name="Tanigami A."/>
            <person name="Fujiwara T."/>
            <person name="Ono T."/>
            <person name="Yamada K."/>
            <person name="Fujii Y."/>
            <person name="Ozaki K."/>
            <person name="Hirao M."/>
            <person name="Ohmori Y."/>
            <person name="Kawabata A."/>
            <person name="Hikiji T."/>
            <person name="Kobatake N."/>
            <person name="Inagaki H."/>
            <person name="Ikema Y."/>
            <person name="Okamoto S."/>
            <person name="Okitani R."/>
            <person name="Kawakami T."/>
            <person name="Noguchi S."/>
            <person name="Itoh T."/>
            <person name="Shigeta K."/>
            <person name="Senba T."/>
            <person name="Matsumura K."/>
            <person name="Nakajima Y."/>
            <person name="Mizuno T."/>
            <person name="Morinaga M."/>
            <person name="Sasaki M."/>
            <person name="Togashi T."/>
            <person name="Oyama M."/>
            <person name="Hata H."/>
            <person name="Watanabe M."/>
            <person name="Komatsu T."/>
            <person name="Mizushima-Sugano J."/>
            <person name="Satoh T."/>
            <person name="Shirai Y."/>
            <person name="Takahashi Y."/>
            <person name="Nakagawa K."/>
            <person name="Okumura K."/>
            <person name="Nagase T."/>
            <person name="Nomura N."/>
            <person name="Kikuchi H."/>
            <person name="Masuho Y."/>
            <person name="Yamashita R."/>
            <person name="Nakai K."/>
            <person name="Yada T."/>
            <person name="Nakamura Y."/>
            <person name="Ohara O."/>
            <person name="Isogai T."/>
            <person name="Sugano S."/>
        </authorList>
    </citation>
    <scope>NUCLEOTIDE SEQUENCE [LARGE SCALE MRNA] (ISOFORM 2)</scope>
    <scope>VARIANT VAL-147</scope>
</reference>
<reference key="3">
    <citation type="journal article" date="2006" name="Nature">
        <title>The finished DNA sequence of human chromosome 12.</title>
        <authorList>
            <person name="Scherer S.E."/>
            <person name="Muzny D.M."/>
            <person name="Buhay C.J."/>
            <person name="Chen R."/>
            <person name="Cree A."/>
            <person name="Ding Y."/>
            <person name="Dugan-Rocha S."/>
            <person name="Gill R."/>
            <person name="Gunaratne P."/>
            <person name="Harris R.A."/>
            <person name="Hawes A.C."/>
            <person name="Hernandez J."/>
            <person name="Hodgson A.V."/>
            <person name="Hume J."/>
            <person name="Jackson A."/>
            <person name="Khan Z.M."/>
            <person name="Kovar-Smith C."/>
            <person name="Lewis L.R."/>
            <person name="Lozado R.J."/>
            <person name="Metzker M.L."/>
            <person name="Milosavljevic A."/>
            <person name="Miner G.R."/>
            <person name="Montgomery K.T."/>
            <person name="Morgan M.B."/>
            <person name="Nazareth L.V."/>
            <person name="Scott G."/>
            <person name="Sodergren E."/>
            <person name="Song X.-Z."/>
            <person name="Steffen D."/>
            <person name="Lovering R.C."/>
            <person name="Wheeler D.A."/>
            <person name="Worley K.C."/>
            <person name="Yuan Y."/>
            <person name="Zhang Z."/>
            <person name="Adams C.Q."/>
            <person name="Ansari-Lari M.A."/>
            <person name="Ayele M."/>
            <person name="Brown M.J."/>
            <person name="Chen G."/>
            <person name="Chen Z."/>
            <person name="Clerc-Blankenburg K.P."/>
            <person name="Davis C."/>
            <person name="Delgado O."/>
            <person name="Dinh H.H."/>
            <person name="Draper H."/>
            <person name="Gonzalez-Garay M.L."/>
            <person name="Havlak P."/>
            <person name="Jackson L.R."/>
            <person name="Jacob L.S."/>
            <person name="Kelly S.H."/>
            <person name="Li L."/>
            <person name="Li Z."/>
            <person name="Liu J."/>
            <person name="Liu W."/>
            <person name="Lu J."/>
            <person name="Maheshwari M."/>
            <person name="Nguyen B.-V."/>
            <person name="Okwuonu G.O."/>
            <person name="Pasternak S."/>
            <person name="Perez L.M."/>
            <person name="Plopper F.J.H."/>
            <person name="Santibanez J."/>
            <person name="Shen H."/>
            <person name="Tabor P.E."/>
            <person name="Verduzco D."/>
            <person name="Waldron L."/>
            <person name="Wang Q."/>
            <person name="Williams G.A."/>
            <person name="Zhang J."/>
            <person name="Zhou J."/>
            <person name="Allen C.C."/>
            <person name="Amin A.G."/>
            <person name="Anyalebechi V."/>
            <person name="Bailey M."/>
            <person name="Barbaria J.A."/>
            <person name="Bimage K.E."/>
            <person name="Bryant N.P."/>
            <person name="Burch P.E."/>
            <person name="Burkett C.E."/>
            <person name="Burrell K.L."/>
            <person name="Calderon E."/>
            <person name="Cardenas V."/>
            <person name="Carter K."/>
            <person name="Casias K."/>
            <person name="Cavazos I."/>
            <person name="Cavazos S.R."/>
            <person name="Ceasar H."/>
            <person name="Chacko J."/>
            <person name="Chan S.N."/>
            <person name="Chavez D."/>
            <person name="Christopoulos C."/>
            <person name="Chu J."/>
            <person name="Cockrell R."/>
            <person name="Cox C.D."/>
            <person name="Dang M."/>
            <person name="Dathorne S.R."/>
            <person name="David R."/>
            <person name="Davis C.M."/>
            <person name="Davy-Carroll L."/>
            <person name="Deshazo D.R."/>
            <person name="Donlin J.E."/>
            <person name="D'Souza L."/>
            <person name="Eaves K.A."/>
            <person name="Egan A."/>
            <person name="Emery-Cohen A.J."/>
            <person name="Escotto M."/>
            <person name="Flagg N."/>
            <person name="Forbes L.D."/>
            <person name="Gabisi A.M."/>
            <person name="Garza M."/>
            <person name="Hamilton C."/>
            <person name="Henderson N."/>
            <person name="Hernandez O."/>
            <person name="Hines S."/>
            <person name="Hogues M.E."/>
            <person name="Huang M."/>
            <person name="Idlebird D.G."/>
            <person name="Johnson R."/>
            <person name="Jolivet A."/>
            <person name="Jones S."/>
            <person name="Kagan R."/>
            <person name="King L.M."/>
            <person name="Leal B."/>
            <person name="Lebow H."/>
            <person name="Lee S."/>
            <person name="LeVan J.M."/>
            <person name="Lewis L.C."/>
            <person name="London P."/>
            <person name="Lorensuhewa L.M."/>
            <person name="Loulseged H."/>
            <person name="Lovett D.A."/>
            <person name="Lucier A."/>
            <person name="Lucier R.L."/>
            <person name="Ma J."/>
            <person name="Madu R.C."/>
            <person name="Mapua P."/>
            <person name="Martindale A.D."/>
            <person name="Martinez E."/>
            <person name="Massey E."/>
            <person name="Mawhiney S."/>
            <person name="Meador M.G."/>
            <person name="Mendez S."/>
            <person name="Mercado C."/>
            <person name="Mercado I.C."/>
            <person name="Merritt C.E."/>
            <person name="Miner Z.L."/>
            <person name="Minja E."/>
            <person name="Mitchell T."/>
            <person name="Mohabbat F."/>
            <person name="Mohabbat K."/>
            <person name="Montgomery B."/>
            <person name="Moore N."/>
            <person name="Morris S."/>
            <person name="Munidasa M."/>
            <person name="Ngo R.N."/>
            <person name="Nguyen N.B."/>
            <person name="Nickerson E."/>
            <person name="Nwaokelemeh O.O."/>
            <person name="Nwokenkwo S."/>
            <person name="Obregon M."/>
            <person name="Oguh M."/>
            <person name="Oragunye N."/>
            <person name="Oviedo R.J."/>
            <person name="Parish B.J."/>
            <person name="Parker D.N."/>
            <person name="Parrish J."/>
            <person name="Parks K.L."/>
            <person name="Paul H.A."/>
            <person name="Payton B.A."/>
            <person name="Perez A."/>
            <person name="Perrin W."/>
            <person name="Pickens A."/>
            <person name="Primus E.L."/>
            <person name="Pu L.-L."/>
            <person name="Puazo M."/>
            <person name="Quiles M.M."/>
            <person name="Quiroz J.B."/>
            <person name="Rabata D."/>
            <person name="Reeves K."/>
            <person name="Ruiz S.J."/>
            <person name="Shao H."/>
            <person name="Sisson I."/>
            <person name="Sonaike T."/>
            <person name="Sorelle R.P."/>
            <person name="Sutton A.E."/>
            <person name="Svatek A.F."/>
            <person name="Svetz L.A."/>
            <person name="Tamerisa K.S."/>
            <person name="Taylor T.R."/>
            <person name="Teague B."/>
            <person name="Thomas N."/>
            <person name="Thorn R.D."/>
            <person name="Trejos Z.Y."/>
            <person name="Trevino B.K."/>
            <person name="Ukegbu O.N."/>
            <person name="Urban J.B."/>
            <person name="Vasquez L.I."/>
            <person name="Vera V.A."/>
            <person name="Villasana D.M."/>
            <person name="Wang L."/>
            <person name="Ward-Moore S."/>
            <person name="Warren J.T."/>
            <person name="Wei X."/>
            <person name="White F."/>
            <person name="Williamson A.L."/>
            <person name="Wleczyk R."/>
            <person name="Wooden H.S."/>
            <person name="Wooden S.H."/>
            <person name="Yen J."/>
            <person name="Yoon L."/>
            <person name="Yoon V."/>
            <person name="Zorrilla S.E."/>
            <person name="Nelson D."/>
            <person name="Kucherlapati R."/>
            <person name="Weinstock G."/>
            <person name="Gibbs R.A."/>
        </authorList>
    </citation>
    <scope>NUCLEOTIDE SEQUENCE [LARGE SCALE GENOMIC DNA]</scope>
</reference>
<reference evidence="16" key="4">
    <citation type="journal article" date="2004" name="Genome Res.">
        <title>The status, quality, and expansion of the NIH full-length cDNA project: the Mammalian Gene Collection (MGC).</title>
        <authorList>
            <consortium name="The MGC Project Team"/>
        </authorList>
    </citation>
    <scope>NUCLEOTIDE SEQUENCE [LARGE SCALE MRNA] (ISOFORM 1)</scope>
    <scope>VARIANT VAL-147</scope>
    <source>
        <tissue evidence="16">Placenta</tissue>
    </source>
</reference>
<reference key="5">
    <citation type="journal article" date="2007" name="Am. J. Hum. Genet.">
        <title>IRAK-M is involved in the pathogenesis of early-onset persistent asthma.</title>
        <authorList>
            <person name="Balaci L."/>
            <person name="Spada M.C."/>
            <person name="Olla N."/>
            <person name="Sole G."/>
            <person name="Loddo L."/>
            <person name="Anedda F."/>
            <person name="Naitza S."/>
            <person name="Zuncheddu M.A."/>
            <person name="Maschio A."/>
            <person name="Altea D."/>
            <person name="Uda M."/>
            <person name="Pilia S."/>
            <person name="Sanna S."/>
            <person name="Masala M."/>
            <person name="Crisponi L."/>
            <person name="Fattori M."/>
            <person name="Devoto M."/>
            <person name="Doratiotto S."/>
            <person name="Rassu S."/>
            <person name="Mereu S."/>
            <person name="Giua E."/>
            <person name="Cadeddu N.G."/>
            <person name="Atzeni R."/>
            <person name="Pelosi U."/>
            <person name="Corrias A."/>
            <person name="Perra R."/>
            <person name="Torrazza P.L."/>
            <person name="Pirina P."/>
            <person name="Ginesu F."/>
            <person name="Marcias S."/>
            <person name="Schintu M.G."/>
            <person name="Del Giacco G.S."/>
            <person name="Manconi P.E."/>
            <person name="Malerba G."/>
            <person name="Bisognin A."/>
            <person name="Trabetti E."/>
            <person name="Boner A."/>
            <person name="Pescollderungg L."/>
            <person name="Pignatti P.F."/>
            <person name="Schlessinger D."/>
            <person name="Cao A."/>
            <person name="Pilia G."/>
        </authorList>
    </citation>
    <scope>INVOLVEMENT IN ASRT5</scope>
    <scope>VARIANTS LEU-22; ALA-111; MET-134; VAL-400 AND GLN-429</scope>
</reference>
<reference key="6">
    <citation type="journal article" date="2009" name="Mol. Cell. Proteomics">
        <title>Large-scale proteomics analysis of the human kinome.</title>
        <authorList>
            <person name="Oppermann F.S."/>
            <person name="Gnad F."/>
            <person name="Olsen J.V."/>
            <person name="Hornberger R."/>
            <person name="Greff Z."/>
            <person name="Keri G."/>
            <person name="Mann M."/>
            <person name="Daub H."/>
        </authorList>
    </citation>
    <scope>PHOSPHORYLATION [LARGE SCALE ANALYSIS] AT SER-467</scope>
    <scope>IDENTIFICATION BY MASS SPECTROMETRY [LARGE SCALE ANALYSIS]</scope>
</reference>
<reference evidence="17" key="7">
    <citation type="journal article" date="2018" name="Nat. Commun.">
        <title>The IL-33-PIN1-IRAK-M axis is critical for type 2 immunity in IL-33-induced allergic airway inflammation.</title>
        <authorList>
            <person name="Nechama M."/>
            <person name="Kwon J."/>
            <person name="Wei S."/>
            <person name="Kyi A.T."/>
            <person name="Welner R.S."/>
            <person name="Ben-Dov I.Z."/>
            <person name="Arredouani M.S."/>
            <person name="Asara J.M."/>
            <person name="Chen C.H."/>
            <person name="Tsai C.Y."/>
            <person name="Nelson K.F."/>
            <person name="Kobayashi K.S."/>
            <person name="Israel E."/>
            <person name="Zhou X.Z."/>
            <person name="Nicholson L.K."/>
            <person name="Lu K.P."/>
        </authorList>
    </citation>
    <scope>STRUCTURE BY NMR OF 1-119 OF MUTANTS ASP-56 AND GLU-61</scope>
    <scope>FUNCTION</scope>
    <scope>INTERACTION WITH PIN1</scope>
    <scope>SUBCELLULAR LOCATION</scope>
    <scope>TISSUE SPECIFICITY</scope>
    <scope>PHOSPHORYLATION AT SER-110</scope>
    <scope>ISOMERIZATION AT 110-SER-PRO-111</scope>
    <scope>MUTAGENESIS OF SER-110 AND SER-467</scope>
    <scope>VARIANT ALA-111</scope>
</reference>
<reference evidence="19" key="8">
    <citation type="submission" date="2020-06" db="PDB data bank">
        <title>The IRAK3 Pseudokinase Domain Bound To ATPgammaS.</title>
        <authorList>
            <person name="Mathea S."/>
            <person name="Chatterjee D."/>
            <person name="Preuss F."/>
            <person name="Kraemer A."/>
            <person name="Knapp S."/>
        </authorList>
    </citation>
    <scope>X-RAY CRYSTALLOGRAPHY (2.18 ANGSTROMS) OF 141-455 IN COMPLEX WITH ATP ANALOG</scope>
</reference>
<reference evidence="18" key="9">
    <citation type="journal article" date="2021" name="Structure">
        <title>Dimeric Structure of the Pseudokinase IRAK3 Suggests an Allosteric Mechanism for Negative Regulation.</title>
        <authorList>
            <person name="Lange S.M."/>
            <person name="Nelen M.I."/>
            <person name="Cohen P."/>
            <person name="Kulathu Y."/>
        </authorList>
    </citation>
    <scope>X-RAY CRYSTALLOGRAPHY (2.95 ANGSTROMS) OF 145-454</scope>
    <scope>SUBUNIT</scope>
    <scope>INTERACTION WITH IRAK4</scope>
    <scope>ATP-BINDING</scope>
    <scope>DISULFIDE BONDS</scope>
    <scope>MUTAGENESIS OF LEU-210 AND GLU-214</scope>
</reference>
<reference key="10">
    <citation type="journal article" date="2007" name="Nature">
        <title>Patterns of somatic mutation in human cancer genomes.</title>
        <authorList>
            <person name="Greenman C."/>
            <person name="Stephens P."/>
            <person name="Smith R."/>
            <person name="Dalgliesh G.L."/>
            <person name="Hunter C."/>
            <person name="Bignell G."/>
            <person name="Davies H."/>
            <person name="Teague J."/>
            <person name="Butler A."/>
            <person name="Stevens C."/>
            <person name="Edkins S."/>
            <person name="O'Meara S."/>
            <person name="Vastrik I."/>
            <person name="Schmidt E.E."/>
            <person name="Avis T."/>
            <person name="Barthorpe S."/>
            <person name="Bhamra G."/>
            <person name="Buck G."/>
            <person name="Choudhury B."/>
            <person name="Clements J."/>
            <person name="Cole J."/>
            <person name="Dicks E."/>
            <person name="Forbes S."/>
            <person name="Gray K."/>
            <person name="Halliday K."/>
            <person name="Harrison R."/>
            <person name="Hills K."/>
            <person name="Hinton J."/>
            <person name="Jenkinson A."/>
            <person name="Jones D."/>
            <person name="Menzies A."/>
            <person name="Mironenko T."/>
            <person name="Perry J."/>
            <person name="Raine K."/>
            <person name="Richardson D."/>
            <person name="Shepherd R."/>
            <person name="Small A."/>
            <person name="Tofts C."/>
            <person name="Varian J."/>
            <person name="Webb T."/>
            <person name="West S."/>
            <person name="Widaa S."/>
            <person name="Yates A."/>
            <person name="Cahill D.P."/>
            <person name="Louis D.N."/>
            <person name="Goldstraw P."/>
            <person name="Nicholson A.G."/>
            <person name="Brasseur F."/>
            <person name="Looijenga L."/>
            <person name="Weber B.L."/>
            <person name="Chiew Y.-E."/>
            <person name="DeFazio A."/>
            <person name="Greaves M.F."/>
            <person name="Green A.R."/>
            <person name="Campbell P."/>
            <person name="Birney E."/>
            <person name="Easton D.F."/>
            <person name="Chenevix-Trench G."/>
            <person name="Tan M.-H."/>
            <person name="Khoo S.K."/>
            <person name="Teh B.T."/>
            <person name="Yuen S.T."/>
            <person name="Leung S.Y."/>
            <person name="Wooster R."/>
            <person name="Futreal P.A."/>
            <person name="Stratton M.R."/>
        </authorList>
    </citation>
    <scope>VARIANTS [LARGE SCALE ANALYSIS] ARG-57; SER-84; VAL-147; VAL-171; LEU-288; GLN-384; THR-391 AND ASN-482</scope>
</reference>
<comment type="function">
    <text evidence="1 5 10">Putative inactive protein kinase which regulates signaling downstream of immune receptors including IL1R and Toll-like receptors (PubMed:10383454, PubMed:29686383). Inhibits dissociation of IRAK1 and IRAK4 from the Toll-like receptor signaling complex by either inhibiting the phosphorylation of IRAK1 and IRAK4 or stabilizing the receptor complex (By similarity). Upon IL33-induced lung inflammation, positively regulates expression of IL6, CSF3, CXCL2 and CCL5 mRNAs in dendritic cells (PubMed:29686383).</text>
</comment>
<comment type="subunit">
    <text evidence="10 11">Monomer (PubMed:33238146). Homodimer; disulfide-linked (PubMed:33238146). May interact with IRAK4 (when phosphorylated) (PubMed:33238146). Interacts (when phosphorylated at Ser-110) with PIN1 (via WW domain) in response to IL33-mediated (but not TLR4 ligand LPS) dendritic cell stimulation (PubMed:29686383).</text>
</comment>
<comment type="interaction">
    <interactant intactId="EBI-447690">
        <id>Q9Y616</id>
    </interactant>
    <interactant intactId="EBI-359276">
        <id>Q9Y4K3</id>
        <label>TRAF6</label>
    </interactant>
    <organismsDiffer>false</organismsDiffer>
    <experiments>3</experiments>
</comment>
<comment type="subcellular location">
    <subcellularLocation>
        <location evidence="10">Cytoplasm</location>
    </subcellularLocation>
    <subcellularLocation>
        <location evidence="10">Nucleus</location>
    </subcellularLocation>
    <text evidence="1">In dendritic cells, translocates into the nucleus upon IL33 stimulation.</text>
</comment>
<comment type="alternative products">
    <event type="alternative splicing"/>
    <isoform>
        <id>Q9Y616-1</id>
        <name>1</name>
        <sequence type="displayed"/>
    </isoform>
    <isoform>
        <id>Q9Y616-2</id>
        <name>2</name>
        <sequence type="described" ref="VSP_041020"/>
    </isoform>
</comment>
<comment type="tissue specificity">
    <text evidence="5 10">Expressed in eosinophils, dendritic cells and/or monocytes (at protein level) (PubMed:29686383). Expressed predominantly in peripheral blood lymphocytes (PubMed:10383454).</text>
</comment>
<comment type="domain">
    <text evidence="11">The nucleotide binding domain binds ATP with low affinity.</text>
</comment>
<comment type="disease" evidence="9">
    <disease id="DI-02870">
        <name>Asthma-related traits 5</name>
        <acronym>ASRT5</acronym>
        <description>Asthma-related traits include clinical symptoms of asthma, such as coughing, wheezing, dyspnea, bronchial hyperresponsiveness as assessed by methacholine challenge test, serum IgE levels, atopy and atopic dermatitis.</description>
        <dbReference type="MIM" id="611064"/>
    </disease>
    <text>Disease susceptibility is associated with variants affecting the gene represented in this entry.</text>
</comment>
<comment type="similarity">
    <text evidence="14">Belongs to the protein kinase superfamily. TKL Ser/Thr protein kinase family. Pelle subfamily.</text>
</comment>
<comment type="caution">
    <text evidence="14">Ser-293 is present instead of the conserved Asp which is expected to be an active site residue. Low level autophosphorylation activity has been reported in PubMed:10383454, while other authors describe this as an inactive kinase.</text>
</comment>
<accession>Q9Y616</accession>
<accession>B4DQ57</accession>
<organism>
    <name type="scientific">Homo sapiens</name>
    <name type="common">Human</name>
    <dbReference type="NCBI Taxonomy" id="9606"/>
    <lineage>
        <taxon>Eukaryota</taxon>
        <taxon>Metazoa</taxon>
        <taxon>Chordata</taxon>
        <taxon>Craniata</taxon>
        <taxon>Vertebrata</taxon>
        <taxon>Euteleostomi</taxon>
        <taxon>Mammalia</taxon>
        <taxon>Eutheria</taxon>
        <taxon>Euarchontoglires</taxon>
        <taxon>Primates</taxon>
        <taxon>Haplorrhini</taxon>
        <taxon>Catarrhini</taxon>
        <taxon>Hominidae</taxon>
        <taxon>Homo</taxon>
    </lineage>
</organism>
<feature type="chain" id="PRO_0000086033" description="Interleukin-1 receptor-associated kinase 3">
    <location>
        <begin position="1"/>
        <end position="596"/>
    </location>
</feature>
<feature type="domain" description="Death" evidence="2">
    <location>
        <begin position="41"/>
        <end position="106"/>
    </location>
</feature>
<feature type="domain" description="Protein kinase" evidence="3">
    <location>
        <begin position="165"/>
        <end position="452"/>
    </location>
</feature>
<feature type="region of interest" description="Disordered" evidence="4">
    <location>
        <begin position="560"/>
        <end position="596"/>
    </location>
</feature>
<feature type="binding site" evidence="3 12 19">
    <location>
        <begin position="171"/>
        <end position="179"/>
    </location>
    <ligand>
        <name>ATP</name>
        <dbReference type="ChEBI" id="CHEBI:30616"/>
    </ligand>
</feature>
<feature type="binding site" evidence="3 12 19">
    <location>
        <position position="192"/>
    </location>
    <ligand>
        <name>ATP</name>
        <dbReference type="ChEBI" id="CHEBI:30616"/>
    </ligand>
</feature>
<feature type="binding site" evidence="3">
    <location>
        <begin position="295"/>
        <end position="298"/>
    </location>
    <ligand>
        <name>ATP</name>
        <dbReference type="ChEBI" id="CHEBI:30616"/>
    </ligand>
</feature>
<feature type="binding site" evidence="3">
    <location>
        <position position="311"/>
    </location>
    <ligand>
        <name>ATP</name>
        <dbReference type="ChEBI" id="CHEBI:30616"/>
    </ligand>
</feature>
<feature type="site" description="Cis/trans isomerization of proline peptide bond; by PIN1; dependent on Ser-110 phosphorylation" evidence="10">
    <location>
        <begin position="110"/>
        <end position="111"/>
    </location>
</feature>
<feature type="modified residue" description="Phosphoserine; by IRAK1" evidence="10">
    <location>
        <position position="110"/>
    </location>
</feature>
<feature type="modified residue" description="Phosphoserine" evidence="20">
    <location>
        <position position="467"/>
    </location>
</feature>
<feature type="disulfide bond" description="Interchain (with C-287); in linked form" evidence="11">
    <location>
        <position position="202"/>
    </location>
</feature>
<feature type="disulfide bond" description="Interchain (with C-202); in linked form" evidence="11">
    <location>
        <position position="287"/>
    </location>
</feature>
<feature type="splice variant" id="VSP_041020" description="In isoform 2." evidence="13">
    <location>
        <begin position="45"/>
        <end position="105"/>
    </location>
</feature>
<feature type="sequence variant" id="VAR_035212" description="Probable risk factor for ASRT5; dbSNP:rs536546109." evidence="9">
    <original>P</original>
    <variation>L</variation>
    <location>
        <position position="22"/>
    </location>
</feature>
<feature type="sequence variant" id="VAR_040581" description="In dbSNP:rs35239505." evidence="8">
    <original>H</original>
    <variation>R</variation>
    <location>
        <position position="57"/>
    </location>
</feature>
<feature type="sequence variant" id="VAR_040582" description="In dbSNP:rs34443407." evidence="8">
    <original>G</original>
    <variation>S</variation>
    <location>
        <position position="84"/>
    </location>
</feature>
<feature type="sequence variant" id="VAR_035213" description="Probable risk factor for ASRT5; abolishes phosphorylation of Ser-110; abolishes interaction with PIN1; no effect on cytoplasmic localization; reduces protein stability; dbSNP:rs373806603." evidence="9 10">
    <original>P</original>
    <variation>A</variation>
    <location>
        <position position="111"/>
    </location>
</feature>
<feature type="sequence variant" id="VAR_035214" description="Probable risk factor for ASRT5; dbSNP:rs138559915." evidence="9">
    <original>V</original>
    <variation>M</variation>
    <location>
        <position position="134"/>
    </location>
</feature>
<feature type="sequence variant" id="VAR_019812" description="In dbSNP:rs1152888." evidence="5 6 7 8">
    <original>I</original>
    <variation>V</variation>
    <location>
        <position position="147"/>
    </location>
</feature>
<feature type="sequence variant" id="VAR_040583" description="In dbSNP:rs34682166." evidence="8">
    <original>I</original>
    <variation>V</variation>
    <location>
        <position position="171"/>
    </location>
</feature>
<feature type="sequence variant" id="VAR_033901" description="In dbSNP:rs35823766.">
    <original>G</original>
    <variation>S</variation>
    <location>
        <position position="269"/>
    </location>
</feature>
<feature type="sequence variant" id="VAR_031077" description="In dbSNP:rs11465972.">
    <original>I</original>
    <variation>V</variation>
    <location>
        <position position="270"/>
    </location>
</feature>
<feature type="sequence variant" id="VAR_040584" description="In dbSNP:rs35574245." evidence="8">
    <original>S</original>
    <variation>L</variation>
    <location>
        <position position="288"/>
    </location>
</feature>
<feature type="sequence variant" id="VAR_040585" description="In dbSNP:rs34272472." evidence="8">
    <original>R</original>
    <variation>Q</variation>
    <location>
        <position position="384"/>
    </location>
</feature>
<feature type="sequence variant" id="VAR_040586" description="In dbSNP:rs35737689." evidence="8">
    <original>M</original>
    <variation>T</variation>
    <location>
        <position position="391"/>
    </location>
</feature>
<feature type="sequence variant" id="VAR_035215" description="Probable risk factor for ASRT5; dbSNP:rs146120640." evidence="9">
    <original>L</original>
    <variation>V</variation>
    <location>
        <position position="400"/>
    </location>
</feature>
<feature type="sequence variant" id="VAR_035216" description="Probable risk factor for ASRT5; dbSNP:rs140671957." evidence="9">
    <original>R</original>
    <variation>Q</variation>
    <location>
        <position position="429"/>
    </location>
</feature>
<feature type="sequence variant" id="VAR_040587" description="In dbSNP:rs35756811." evidence="8">
    <original>D</original>
    <variation>N</variation>
    <location>
        <position position="482"/>
    </location>
</feature>
<feature type="mutagenesis site" description="Abolishes phosphorylation. Abolishes interaction with PIN1. Reduces protein stability." evidence="10">
    <original>S</original>
    <variation>A</variation>
    <location>
        <position position="110"/>
    </location>
</feature>
<feature type="mutagenesis site" description="Phosphomimic. Slight decrease in the interaction with PIN1. Weak interaction with PIN1 in absence of IL33-mediated dendritic cell stimulation. Increases resistant to degradation. Localizes to the nucleus in absence of stimulus. Does not affect isomerization of Pro-111 peptide bond." evidence="10">
    <original>S</original>
    <variation>E</variation>
    <location>
        <position position="110"/>
    </location>
</feature>
<feature type="mutagenesis site" description="Abolishes dimerization." evidence="11">
    <original>L</original>
    <variation>E</variation>
    <location>
        <position position="210"/>
    </location>
</feature>
<feature type="mutagenesis site" description="Enhances dimerization." evidence="11">
    <original>E</original>
    <variation>L</variation>
    <location>
        <position position="214"/>
    </location>
</feature>
<feature type="mutagenesis site" description="No effect on the interaction with PIN1." evidence="10">
    <original>S</original>
    <variation>A</variation>
    <location>
        <position position="467"/>
    </location>
</feature>
<feature type="sequence conflict" description="In Ref. 2; BAG60819." evidence="14" ref="2">
    <original>N</original>
    <variation>D</variation>
    <location>
        <position position="560"/>
    </location>
</feature>
<feature type="strand" evidence="21">
    <location>
        <begin position="17"/>
        <end position="19"/>
    </location>
</feature>
<feature type="turn" evidence="21">
    <location>
        <begin position="22"/>
        <end position="24"/>
    </location>
</feature>
<feature type="helix" evidence="21">
    <location>
        <begin position="25"/>
        <end position="31"/>
    </location>
</feature>
<feature type="helix" evidence="21">
    <location>
        <begin position="32"/>
        <end position="34"/>
    </location>
</feature>
<feature type="strand" evidence="21">
    <location>
        <begin position="36"/>
        <end position="39"/>
    </location>
</feature>
<feature type="helix" evidence="21">
    <location>
        <begin position="43"/>
        <end position="48"/>
    </location>
</feature>
<feature type="helix" evidence="21">
    <location>
        <begin position="54"/>
        <end position="61"/>
    </location>
</feature>
<feature type="helix" evidence="21">
    <location>
        <begin position="62"/>
        <end position="64"/>
    </location>
</feature>
<feature type="helix" evidence="21">
    <location>
        <begin position="68"/>
        <end position="74"/>
    </location>
</feature>
<feature type="strand" evidence="21">
    <location>
        <begin position="76"/>
        <end position="78"/>
    </location>
</feature>
<feature type="helix" evidence="21">
    <location>
        <begin position="83"/>
        <end position="93"/>
    </location>
</feature>
<feature type="helix" evidence="21">
    <location>
        <begin position="96"/>
        <end position="102"/>
    </location>
</feature>
<feature type="strand" evidence="21">
    <location>
        <begin position="107"/>
        <end position="109"/>
    </location>
</feature>
<feature type="helix" evidence="23">
    <location>
        <begin position="155"/>
        <end position="161"/>
    </location>
</feature>
<feature type="turn" evidence="23">
    <location>
        <begin position="162"/>
        <end position="165"/>
    </location>
</feature>
<feature type="helix" evidence="23">
    <location>
        <begin position="167"/>
        <end position="169"/>
    </location>
</feature>
<feature type="strand" evidence="23">
    <location>
        <begin position="170"/>
        <end position="173"/>
    </location>
</feature>
<feature type="strand" evidence="23">
    <location>
        <begin position="175"/>
        <end position="184"/>
    </location>
</feature>
<feature type="strand" evidence="23">
    <location>
        <begin position="187"/>
        <end position="194"/>
    </location>
</feature>
<feature type="helix" evidence="23">
    <location>
        <begin position="203"/>
        <end position="218"/>
    </location>
</feature>
<feature type="strand" evidence="23">
    <location>
        <begin position="229"/>
        <end position="231"/>
    </location>
</feature>
<feature type="helix" evidence="22">
    <location>
        <begin position="233"/>
        <end position="235"/>
    </location>
</feature>
<feature type="strand" evidence="23">
    <location>
        <begin position="238"/>
        <end position="242"/>
    </location>
</feature>
<feature type="helix" evidence="23">
    <location>
        <begin position="249"/>
        <end position="253"/>
    </location>
</feature>
<feature type="helix" evidence="23">
    <location>
        <begin position="256"/>
        <end position="258"/>
    </location>
</feature>
<feature type="helix" evidence="23">
    <location>
        <begin position="264"/>
        <end position="281"/>
    </location>
</feature>
<feature type="strand" evidence="23">
    <location>
        <begin position="285"/>
        <end position="287"/>
    </location>
</feature>
<feature type="strand" evidence="23">
    <location>
        <begin position="295"/>
        <end position="301"/>
    </location>
</feature>
<feature type="strand" evidence="23">
    <location>
        <begin position="307"/>
        <end position="309"/>
    </location>
</feature>
<feature type="strand" evidence="22">
    <location>
        <begin position="316"/>
        <end position="318"/>
    </location>
</feature>
<feature type="helix" evidence="23">
    <location>
        <begin position="343"/>
        <end position="348"/>
    </location>
</feature>
<feature type="helix" evidence="23">
    <location>
        <begin position="353"/>
        <end position="369"/>
    </location>
</feature>
<feature type="strand" evidence="22">
    <location>
        <begin position="376"/>
        <end position="379"/>
    </location>
</feature>
<feature type="helix" evidence="23">
    <location>
        <begin position="383"/>
        <end position="394"/>
    </location>
</feature>
<feature type="helix" evidence="23">
    <location>
        <begin position="396"/>
        <end position="402"/>
    </location>
</feature>
<feature type="helix" evidence="23">
    <location>
        <begin position="412"/>
        <end position="425"/>
    </location>
</feature>
<feature type="helix" evidence="23">
    <location>
        <begin position="430"/>
        <end position="432"/>
    </location>
</feature>
<feature type="helix" evidence="23">
    <location>
        <begin position="436"/>
        <end position="449"/>
    </location>
</feature>
<sequence length="596" mass="67767">MAGNCGARGALSAHTLLFDLPPALLGELCAVLDSCDGALGWRGLAERLSSSWLDVRHIEKYVDQGKSGTRELLWSWAQKNKTIGDLLQVLQEMGHRRAIHLITNYGAVLSPSEKSYQEGGFPNILFKETANVTVDNVLIPEHNEKGILLKSSISFQNIIEGTRNFHKDFLIGEGEIFEVYRVEIQNLTYAVKLFKQEKKMQCKKHWKRFLSELEVLLLFHHPNILELAAYFTETEKFCLIYPYMRNGTLFDRLQCVGDTAPLPWHIRIGILIGISKAIHYLHNVQPCSVICGSISSANILLDDQFQPKLTDFAMAHFRSHLEHQSCTINMTSSSSKHLWYMPEEYIRQGKLSIKTDVYSFGIVIMEVLTGCRVVLDDPKHIQLRDLLRELMEKRGLDSCLSFLDKKVPPCPRNFSAKLFCLAGRCAATRAKLRPSMDEVLNTLESTQASLYFAEDPPTSLKSFRCPSPLFLENVPSIPVEDDESQNNNLLPSDEGLRIDRMTQKTPFECSQSEVMFLSLDKKPESKRNEEACNMPSSSCEESWFPKYIVPSQDLRPYKVNIDPSSEAPGHSCRSRPVESSCSSKFSWDEYEQYKKE</sequence>
<proteinExistence type="evidence at protein level"/>
<name>IRAK3_HUMAN</name>
<dbReference type="EMBL" id="AF113136">
    <property type="protein sequence ID" value="AAD40879.1"/>
    <property type="molecule type" value="mRNA"/>
</dbReference>
<dbReference type="EMBL" id="AK298645">
    <property type="protein sequence ID" value="BAG60819.1"/>
    <property type="molecule type" value="mRNA"/>
</dbReference>
<dbReference type="EMBL" id="AC078889">
    <property type="status" value="NOT_ANNOTATED_CDS"/>
    <property type="molecule type" value="Genomic_DNA"/>
</dbReference>
<dbReference type="EMBL" id="AC078927">
    <property type="status" value="NOT_ANNOTATED_CDS"/>
    <property type="molecule type" value="Genomic_DNA"/>
</dbReference>
<dbReference type="EMBL" id="BC057800">
    <property type="protein sequence ID" value="AAH57800.1"/>
    <property type="molecule type" value="mRNA"/>
</dbReference>
<dbReference type="EMBL" id="BC069388">
    <property type="protein sequence ID" value="AAH69388.1"/>
    <property type="molecule type" value="mRNA"/>
</dbReference>
<dbReference type="CCDS" id="CCDS44937.1">
    <molecule id="Q9Y616-2"/>
</dbReference>
<dbReference type="CCDS" id="CCDS8975.1">
    <molecule id="Q9Y616-1"/>
</dbReference>
<dbReference type="RefSeq" id="NP_001135995.1">
    <molecule id="Q9Y616-2"/>
    <property type="nucleotide sequence ID" value="NM_001142523.2"/>
</dbReference>
<dbReference type="RefSeq" id="NP_009130.2">
    <molecule id="Q9Y616-1"/>
    <property type="nucleotide sequence ID" value="NM_007199.3"/>
</dbReference>
<dbReference type="PDB" id="5UKE">
    <property type="method" value="NMR"/>
    <property type="chains" value="A=1-119"/>
</dbReference>
<dbReference type="PDB" id="6RUU">
    <property type="method" value="X-ray"/>
    <property type="resolution" value="2.95 A"/>
    <property type="chains" value="A/B/C=145-454"/>
</dbReference>
<dbReference type="PDB" id="6ZIW">
    <property type="method" value="X-ray"/>
    <property type="resolution" value="2.18 A"/>
    <property type="chains" value="I=141-455"/>
</dbReference>
<dbReference type="PDBsum" id="5UKE"/>
<dbReference type="PDBsum" id="6RUU"/>
<dbReference type="PDBsum" id="6ZIW"/>
<dbReference type="SMR" id="Q9Y616"/>
<dbReference type="BioGRID" id="116382">
    <property type="interactions" value="32"/>
</dbReference>
<dbReference type="CORUM" id="Q9Y616"/>
<dbReference type="FunCoup" id="Q9Y616">
    <property type="interactions" value="794"/>
</dbReference>
<dbReference type="IntAct" id="Q9Y616">
    <property type="interactions" value="27"/>
</dbReference>
<dbReference type="MINT" id="Q9Y616"/>
<dbReference type="STRING" id="9606.ENSP00000261233"/>
<dbReference type="BindingDB" id="Q9Y616"/>
<dbReference type="ChEMBL" id="CHEMBL5081"/>
<dbReference type="DrugBank" id="DB12010">
    <property type="generic name" value="Fostamatinib"/>
</dbReference>
<dbReference type="DrugCentral" id="Q9Y616"/>
<dbReference type="GuidetoPHARMACOLOGY" id="2044"/>
<dbReference type="GlyGen" id="Q9Y616">
    <property type="glycosylation" value="2 sites, 1 N-linked glycan (1 site), 1 O-linked glycan (1 site)"/>
</dbReference>
<dbReference type="iPTMnet" id="Q9Y616"/>
<dbReference type="PhosphoSitePlus" id="Q9Y616"/>
<dbReference type="BioMuta" id="IRAK3"/>
<dbReference type="DMDM" id="322510038"/>
<dbReference type="CPTAC" id="CPTAC-3189"/>
<dbReference type="CPTAC" id="CPTAC-3190"/>
<dbReference type="jPOST" id="Q9Y616"/>
<dbReference type="MassIVE" id="Q9Y616"/>
<dbReference type="PaxDb" id="9606-ENSP00000261233"/>
<dbReference type="PeptideAtlas" id="Q9Y616"/>
<dbReference type="ProteomicsDB" id="86578">
    <molecule id="Q9Y616-1"/>
</dbReference>
<dbReference type="ProteomicsDB" id="86579">
    <molecule id="Q9Y616-2"/>
</dbReference>
<dbReference type="Antibodypedia" id="16652">
    <property type="antibodies" value="583 antibodies from 44 providers"/>
</dbReference>
<dbReference type="DNASU" id="11213"/>
<dbReference type="Ensembl" id="ENST00000261233.9">
    <molecule id="Q9Y616-1"/>
    <property type="protein sequence ID" value="ENSP00000261233.4"/>
    <property type="gene ID" value="ENSG00000090376.11"/>
</dbReference>
<dbReference type="Ensembl" id="ENST00000457197.2">
    <molecule id="Q9Y616-2"/>
    <property type="protein sequence ID" value="ENSP00000409852.2"/>
    <property type="gene ID" value="ENSG00000090376.11"/>
</dbReference>
<dbReference type="GeneID" id="11213"/>
<dbReference type="KEGG" id="hsa:11213"/>
<dbReference type="MANE-Select" id="ENST00000261233.9">
    <property type="protein sequence ID" value="ENSP00000261233.4"/>
    <property type="RefSeq nucleotide sequence ID" value="NM_007199.3"/>
    <property type="RefSeq protein sequence ID" value="NP_009130.2"/>
</dbReference>
<dbReference type="UCSC" id="uc001sth.4">
    <molecule id="Q9Y616-1"/>
    <property type="organism name" value="human"/>
</dbReference>
<dbReference type="AGR" id="HGNC:17020"/>
<dbReference type="CTD" id="11213"/>
<dbReference type="DisGeNET" id="11213"/>
<dbReference type="GeneCards" id="IRAK3"/>
<dbReference type="HGNC" id="HGNC:17020">
    <property type="gene designation" value="IRAK3"/>
</dbReference>
<dbReference type="HPA" id="ENSG00000090376">
    <property type="expression patterns" value="Tissue enhanced (bone)"/>
</dbReference>
<dbReference type="MalaCards" id="IRAK3"/>
<dbReference type="MIM" id="604459">
    <property type="type" value="gene"/>
</dbReference>
<dbReference type="MIM" id="611064">
    <property type="type" value="phenotype"/>
</dbReference>
<dbReference type="neXtProt" id="NX_Q9Y616"/>
<dbReference type="OpenTargets" id="ENSG00000090376"/>
<dbReference type="PharmGKB" id="PA38431"/>
<dbReference type="VEuPathDB" id="HostDB:ENSG00000090376"/>
<dbReference type="eggNOG" id="KOG1187">
    <property type="taxonomic scope" value="Eukaryota"/>
</dbReference>
<dbReference type="GeneTree" id="ENSGT00940000161222"/>
<dbReference type="HOGENOM" id="CLU_029530_0_0_1"/>
<dbReference type="InParanoid" id="Q9Y616"/>
<dbReference type="OMA" id="YVEQGKS"/>
<dbReference type="OrthoDB" id="4062651at2759"/>
<dbReference type="PAN-GO" id="Q9Y616">
    <property type="GO annotations" value="10 GO annotations based on evolutionary models"/>
</dbReference>
<dbReference type="PhylomeDB" id="Q9Y616"/>
<dbReference type="TreeFam" id="TF328924"/>
<dbReference type="PathwayCommons" id="Q9Y616"/>
<dbReference type="Reactome" id="R-HSA-166058">
    <property type="pathway name" value="MyD88:MAL(TIRAP) cascade initiated on plasma membrane"/>
</dbReference>
<dbReference type="Reactome" id="R-HSA-9020702">
    <property type="pathway name" value="Interleukin-1 signaling"/>
</dbReference>
<dbReference type="SignaLink" id="Q9Y616"/>
<dbReference type="SIGNOR" id="Q9Y616"/>
<dbReference type="BioGRID-ORCS" id="11213">
    <property type="hits" value="17 hits in 1191 CRISPR screens"/>
</dbReference>
<dbReference type="ChiTaRS" id="IRAK3">
    <property type="organism name" value="human"/>
</dbReference>
<dbReference type="GeneWiki" id="IRAK3"/>
<dbReference type="GenomeRNAi" id="11213"/>
<dbReference type="Pharos" id="Q9Y616">
    <property type="development level" value="Tchem"/>
</dbReference>
<dbReference type="PRO" id="PR:Q9Y616"/>
<dbReference type="Proteomes" id="UP000005640">
    <property type="component" value="Chromosome 12"/>
</dbReference>
<dbReference type="RNAct" id="Q9Y616">
    <property type="molecule type" value="protein"/>
</dbReference>
<dbReference type="Bgee" id="ENSG00000090376">
    <property type="expression patterns" value="Expressed in monocyte and 161 other cell types or tissues"/>
</dbReference>
<dbReference type="ExpressionAtlas" id="Q9Y616">
    <property type="expression patterns" value="baseline and differential"/>
</dbReference>
<dbReference type="GO" id="GO:0005737">
    <property type="term" value="C:cytoplasm"/>
    <property type="evidence" value="ECO:0000314"/>
    <property type="project" value="BHF-UCL"/>
</dbReference>
<dbReference type="GO" id="GO:0005634">
    <property type="term" value="C:nucleus"/>
    <property type="evidence" value="ECO:0000314"/>
    <property type="project" value="BHF-UCL"/>
</dbReference>
<dbReference type="GO" id="GO:0005886">
    <property type="term" value="C:plasma membrane"/>
    <property type="evidence" value="ECO:0000318"/>
    <property type="project" value="GO_Central"/>
</dbReference>
<dbReference type="GO" id="GO:0005524">
    <property type="term" value="F:ATP binding"/>
    <property type="evidence" value="ECO:0000314"/>
    <property type="project" value="UniProtKB"/>
</dbReference>
<dbReference type="GO" id="GO:0000287">
    <property type="term" value="F:magnesium ion binding"/>
    <property type="evidence" value="ECO:0000314"/>
    <property type="project" value="UniProtKB"/>
</dbReference>
<dbReference type="GO" id="GO:0046982">
    <property type="term" value="F:protein heterodimerization activity"/>
    <property type="evidence" value="ECO:0000353"/>
    <property type="project" value="BHF-UCL"/>
</dbReference>
<dbReference type="GO" id="GO:0042803">
    <property type="term" value="F:protein homodimerization activity"/>
    <property type="evidence" value="ECO:0000314"/>
    <property type="project" value="UniProtKB"/>
</dbReference>
<dbReference type="GO" id="GO:0019901">
    <property type="term" value="F:protein kinase binding"/>
    <property type="evidence" value="ECO:0000353"/>
    <property type="project" value="UniProtKB"/>
</dbReference>
<dbReference type="GO" id="GO:0004674">
    <property type="term" value="F:protein serine/threonine kinase activity"/>
    <property type="evidence" value="ECO:0000314"/>
    <property type="project" value="UniProtKB"/>
</dbReference>
<dbReference type="GO" id="GO:0019221">
    <property type="term" value="P:cytokine-mediated signaling pathway"/>
    <property type="evidence" value="ECO:0000250"/>
    <property type="project" value="UniProtKB"/>
</dbReference>
<dbReference type="GO" id="GO:0070498">
    <property type="term" value="P:interleukin-1-mediated signaling pathway"/>
    <property type="evidence" value="ECO:0000315"/>
    <property type="project" value="BHF-UCL"/>
</dbReference>
<dbReference type="GO" id="GO:0035556">
    <property type="term" value="P:intracellular signal transduction"/>
    <property type="evidence" value="ECO:0000318"/>
    <property type="project" value="GO_Central"/>
</dbReference>
<dbReference type="GO" id="GO:0031663">
    <property type="term" value="P:lipopolysaccharide-mediated signaling pathway"/>
    <property type="evidence" value="ECO:0000315"/>
    <property type="project" value="BHF-UCL"/>
</dbReference>
<dbReference type="GO" id="GO:0002755">
    <property type="term" value="P:MyD88-dependent toll-like receptor signaling pathway"/>
    <property type="evidence" value="ECO:0000304"/>
    <property type="project" value="BHF-UCL"/>
</dbReference>
<dbReference type="GO" id="GO:0043124">
    <property type="term" value="P:negative regulation of canonical NF-kappaB signal transduction"/>
    <property type="evidence" value="ECO:0000315"/>
    <property type="project" value="BHF-UCL"/>
</dbReference>
<dbReference type="GO" id="GO:0001960">
    <property type="term" value="P:negative regulation of cytokine-mediated signaling pathway"/>
    <property type="evidence" value="ECO:0000305"/>
    <property type="project" value="BHF-UCL"/>
</dbReference>
<dbReference type="GO" id="GO:0045824">
    <property type="term" value="P:negative regulation of innate immune response"/>
    <property type="evidence" value="ECO:0000250"/>
    <property type="project" value="BHF-UCL"/>
</dbReference>
<dbReference type="GO" id="GO:0032695">
    <property type="term" value="P:negative regulation of interleukin-12 production"/>
    <property type="evidence" value="ECO:0000315"/>
    <property type="project" value="BHF-UCL"/>
</dbReference>
<dbReference type="GO" id="GO:0032715">
    <property type="term" value="P:negative regulation of interleukin-6 production"/>
    <property type="evidence" value="ECO:0000315"/>
    <property type="project" value="BHF-UCL"/>
</dbReference>
<dbReference type="GO" id="GO:0010936">
    <property type="term" value="P:negative regulation of macrophage cytokine production"/>
    <property type="evidence" value="ECO:0000250"/>
    <property type="project" value="BHF-UCL"/>
</dbReference>
<dbReference type="GO" id="GO:0043409">
    <property type="term" value="P:negative regulation of MAPK cascade"/>
    <property type="evidence" value="ECO:0000315"/>
    <property type="project" value="BHF-UCL"/>
</dbReference>
<dbReference type="GO" id="GO:0042177">
    <property type="term" value="P:negative regulation of protein catabolic process"/>
    <property type="evidence" value="ECO:0000315"/>
    <property type="project" value="BHF-UCL"/>
</dbReference>
<dbReference type="GO" id="GO:0043242">
    <property type="term" value="P:negative regulation of protein-containing complex disassembly"/>
    <property type="evidence" value="ECO:0000315"/>
    <property type="project" value="BHF-UCL"/>
</dbReference>
<dbReference type="GO" id="GO:0034122">
    <property type="term" value="P:negative regulation of toll-like receptor signaling pathway"/>
    <property type="evidence" value="ECO:0000250"/>
    <property type="project" value="BHF-UCL"/>
</dbReference>
<dbReference type="GO" id="GO:0032720">
    <property type="term" value="P:negative regulation of tumor necrosis factor production"/>
    <property type="evidence" value="ECO:0000315"/>
    <property type="project" value="BHF-UCL"/>
</dbReference>
<dbReference type="GO" id="GO:0043123">
    <property type="term" value="P:positive regulation of canonical NF-kappaB signal transduction"/>
    <property type="evidence" value="ECO:0000318"/>
    <property type="project" value="GO_Central"/>
</dbReference>
<dbReference type="GO" id="GO:0001819">
    <property type="term" value="P:positive regulation of cytokine production"/>
    <property type="evidence" value="ECO:0007669"/>
    <property type="project" value="Ensembl"/>
</dbReference>
<dbReference type="GO" id="GO:0010933">
    <property type="term" value="P:positive regulation of macrophage tolerance induction"/>
    <property type="evidence" value="ECO:0000250"/>
    <property type="project" value="BHF-UCL"/>
</dbReference>
<dbReference type="GO" id="GO:0006468">
    <property type="term" value="P:protein phosphorylation"/>
    <property type="evidence" value="ECO:0000314"/>
    <property type="project" value="UniProtKB"/>
</dbReference>
<dbReference type="GO" id="GO:0043244">
    <property type="term" value="P:regulation of protein-containing complex disassembly"/>
    <property type="evidence" value="ECO:0000250"/>
    <property type="project" value="UniProtKB"/>
</dbReference>
<dbReference type="GO" id="GO:0043330">
    <property type="term" value="P:response to exogenous dsRNA"/>
    <property type="evidence" value="ECO:0000250"/>
    <property type="project" value="BHF-UCL"/>
</dbReference>
<dbReference type="GO" id="GO:0070555">
    <property type="term" value="P:response to interleukin-1"/>
    <property type="evidence" value="ECO:0000315"/>
    <property type="project" value="BHF-UCL"/>
</dbReference>
<dbReference type="GO" id="GO:0032496">
    <property type="term" value="P:response to lipopolysaccharide"/>
    <property type="evidence" value="ECO:0000250"/>
    <property type="project" value="BHF-UCL"/>
</dbReference>
<dbReference type="GO" id="GO:0032494">
    <property type="term" value="P:response to peptidoglycan"/>
    <property type="evidence" value="ECO:0000250"/>
    <property type="project" value="BHF-UCL"/>
</dbReference>
<dbReference type="GO" id="GO:0009615">
    <property type="term" value="P:response to virus"/>
    <property type="evidence" value="ECO:0000305"/>
    <property type="project" value="BHF-UCL"/>
</dbReference>
<dbReference type="GO" id="GO:0008063">
    <property type="term" value="P:Toll signaling pathway"/>
    <property type="evidence" value="ECO:0000318"/>
    <property type="project" value="GO_Central"/>
</dbReference>
<dbReference type="CDD" id="cd08796">
    <property type="entry name" value="Death_IRAK-M"/>
    <property type="match status" value="1"/>
</dbReference>
<dbReference type="CDD" id="cd14160">
    <property type="entry name" value="PK_IRAK3"/>
    <property type="match status" value="1"/>
</dbReference>
<dbReference type="FunFam" id="1.10.510.10:FF:000461">
    <property type="entry name" value="Interleukin 1 receptor associated kinase 3"/>
    <property type="match status" value="1"/>
</dbReference>
<dbReference type="FunFam" id="3.30.200.20:FF:000364">
    <property type="entry name" value="Interleukin 1 receptor associated kinase 3"/>
    <property type="match status" value="1"/>
</dbReference>
<dbReference type="FunFam" id="1.10.533.10:FF:000055">
    <property type="entry name" value="Interleukin-1 receptor-associated kinase 3"/>
    <property type="match status" value="1"/>
</dbReference>
<dbReference type="Gene3D" id="1.10.533.10">
    <property type="entry name" value="Death Domain, Fas"/>
    <property type="match status" value="1"/>
</dbReference>
<dbReference type="Gene3D" id="3.30.200.20">
    <property type="entry name" value="Phosphorylase Kinase, domain 1"/>
    <property type="match status" value="1"/>
</dbReference>
<dbReference type="Gene3D" id="1.10.510.10">
    <property type="entry name" value="Transferase(Phosphotransferase) domain 1"/>
    <property type="match status" value="1"/>
</dbReference>
<dbReference type="InterPro" id="IPR011029">
    <property type="entry name" value="DEATH-like_dom_sf"/>
</dbReference>
<dbReference type="InterPro" id="IPR000488">
    <property type="entry name" value="Death_dom"/>
</dbReference>
<dbReference type="InterPro" id="IPR042747">
    <property type="entry name" value="IRAK3_death"/>
</dbReference>
<dbReference type="InterPro" id="IPR042698">
    <property type="entry name" value="IRAK3_PK"/>
</dbReference>
<dbReference type="InterPro" id="IPR011009">
    <property type="entry name" value="Kinase-like_dom_sf"/>
</dbReference>
<dbReference type="InterPro" id="IPR000719">
    <property type="entry name" value="Prot_kinase_dom"/>
</dbReference>
<dbReference type="PANTHER" id="PTHR24419">
    <property type="entry name" value="INTERLEUKIN-1 RECEPTOR-ASSOCIATED KINASE"/>
    <property type="match status" value="1"/>
</dbReference>
<dbReference type="PANTHER" id="PTHR24419:SF7">
    <property type="entry name" value="INTERLEUKIN-1 RECEPTOR-ASSOCIATED KINASE 3"/>
    <property type="match status" value="1"/>
</dbReference>
<dbReference type="Pfam" id="PF00531">
    <property type="entry name" value="Death"/>
    <property type="match status" value="1"/>
</dbReference>
<dbReference type="Pfam" id="PF00069">
    <property type="entry name" value="Pkinase"/>
    <property type="match status" value="1"/>
</dbReference>
<dbReference type="SMART" id="SM00005">
    <property type="entry name" value="DEATH"/>
    <property type="match status" value="1"/>
</dbReference>
<dbReference type="SUPFAM" id="SSF47986">
    <property type="entry name" value="DEATH domain"/>
    <property type="match status" value="1"/>
</dbReference>
<dbReference type="SUPFAM" id="SSF56112">
    <property type="entry name" value="Protein kinase-like (PK-like)"/>
    <property type="match status" value="1"/>
</dbReference>
<dbReference type="PROSITE" id="PS50017">
    <property type="entry name" value="DEATH_DOMAIN"/>
    <property type="match status" value="1"/>
</dbReference>
<dbReference type="PROSITE" id="PS50011">
    <property type="entry name" value="PROTEIN_KINASE_DOM"/>
    <property type="match status" value="1"/>
</dbReference>
<keyword id="KW-0002">3D-structure</keyword>
<keyword id="KW-0025">Alternative splicing</keyword>
<keyword id="KW-1058">Asthma</keyword>
<keyword id="KW-0067">ATP-binding</keyword>
<keyword id="KW-0963">Cytoplasm</keyword>
<keyword id="KW-1015">Disulfide bond</keyword>
<keyword id="KW-0547">Nucleotide-binding</keyword>
<keyword id="KW-0539">Nucleus</keyword>
<keyword id="KW-0597">Phosphoprotein</keyword>
<keyword id="KW-1267">Proteomics identification</keyword>
<keyword id="KW-1185">Reference proteome</keyword>